<protein>
    <recommendedName>
        <fullName evidence="1">Redox-sensing transcriptional repressor Rex</fullName>
    </recommendedName>
</protein>
<sequence>MTEQKIPRATAKRLPIYYRYLNILLDADKTRVSSTELSEAVKVDSATIRRDFSYFGALGKRGYGYDVESLIKFFKKILNQDRLTNVALIGVGNLGHALLNFNFHQDGNVRISAAFDVNETIANTIQSGVPIYPMTDLRTQLEEQQIQVAILTVPSDVAQSVTDDAVAGGVKGILNFTPLRITVPKDVRVQNVDLTNELQTLIYFLEHYNSKE</sequence>
<comment type="function">
    <text evidence="1">Modulates transcription in response to changes in cellular NADH/NAD(+) redox state.</text>
</comment>
<comment type="subunit">
    <text evidence="1">Homodimer.</text>
</comment>
<comment type="subcellular location">
    <subcellularLocation>
        <location evidence="1">Cytoplasm</location>
    </subcellularLocation>
</comment>
<comment type="similarity">
    <text evidence="1">Belongs to the transcriptional regulatory Rex family.</text>
</comment>
<gene>
    <name evidence="1" type="primary">rex</name>
    <name type="ordered locus">LVIS_0616</name>
</gene>
<feature type="chain" id="PRO_1000065403" description="Redox-sensing transcriptional repressor Rex">
    <location>
        <begin position="1"/>
        <end position="212"/>
    </location>
</feature>
<feature type="DNA-binding region" description="H-T-H motif" evidence="1">
    <location>
        <begin position="16"/>
        <end position="55"/>
    </location>
</feature>
<feature type="binding site" evidence="1">
    <location>
        <begin position="90"/>
        <end position="95"/>
    </location>
    <ligand>
        <name>NAD(+)</name>
        <dbReference type="ChEBI" id="CHEBI:57540"/>
    </ligand>
</feature>
<name>REX_LEVBA</name>
<organism>
    <name type="scientific">Levilactobacillus brevis (strain ATCC 367 / BCRC 12310 / CIP 105137 / JCM 1170 / LMG 11437 / NCIMB 947 / NCTC 947)</name>
    <name type="common">Lactobacillus brevis</name>
    <dbReference type="NCBI Taxonomy" id="387344"/>
    <lineage>
        <taxon>Bacteria</taxon>
        <taxon>Bacillati</taxon>
        <taxon>Bacillota</taxon>
        <taxon>Bacilli</taxon>
        <taxon>Lactobacillales</taxon>
        <taxon>Lactobacillaceae</taxon>
        <taxon>Levilactobacillus</taxon>
    </lineage>
</organism>
<proteinExistence type="inferred from homology"/>
<evidence type="ECO:0000255" key="1">
    <source>
        <dbReference type="HAMAP-Rule" id="MF_01131"/>
    </source>
</evidence>
<accession>Q03SR1</accession>
<reference key="1">
    <citation type="journal article" date="2006" name="Proc. Natl. Acad. Sci. U.S.A.">
        <title>Comparative genomics of the lactic acid bacteria.</title>
        <authorList>
            <person name="Makarova K.S."/>
            <person name="Slesarev A."/>
            <person name="Wolf Y.I."/>
            <person name="Sorokin A."/>
            <person name="Mirkin B."/>
            <person name="Koonin E.V."/>
            <person name="Pavlov A."/>
            <person name="Pavlova N."/>
            <person name="Karamychev V."/>
            <person name="Polouchine N."/>
            <person name="Shakhova V."/>
            <person name="Grigoriev I."/>
            <person name="Lou Y."/>
            <person name="Rohksar D."/>
            <person name="Lucas S."/>
            <person name="Huang K."/>
            <person name="Goodstein D.M."/>
            <person name="Hawkins T."/>
            <person name="Plengvidhya V."/>
            <person name="Welker D."/>
            <person name="Hughes J."/>
            <person name="Goh Y."/>
            <person name="Benson A."/>
            <person name="Baldwin K."/>
            <person name="Lee J.-H."/>
            <person name="Diaz-Muniz I."/>
            <person name="Dosti B."/>
            <person name="Smeianov V."/>
            <person name="Wechter W."/>
            <person name="Barabote R."/>
            <person name="Lorca G."/>
            <person name="Altermann E."/>
            <person name="Barrangou R."/>
            <person name="Ganesan B."/>
            <person name="Xie Y."/>
            <person name="Rawsthorne H."/>
            <person name="Tamir D."/>
            <person name="Parker C."/>
            <person name="Breidt F."/>
            <person name="Broadbent J.R."/>
            <person name="Hutkins R."/>
            <person name="O'Sullivan D."/>
            <person name="Steele J."/>
            <person name="Unlu G."/>
            <person name="Saier M.H. Jr."/>
            <person name="Klaenhammer T."/>
            <person name="Richardson P."/>
            <person name="Kozyavkin S."/>
            <person name="Weimer B.C."/>
            <person name="Mills D.A."/>
        </authorList>
    </citation>
    <scope>NUCLEOTIDE SEQUENCE [LARGE SCALE GENOMIC DNA]</scope>
    <source>
        <strain>ATCC 367 / BCRC 12310 / CIP 105137 / JCM 1170 / LMG 11437 / NCIMB 947 / NCTC 947</strain>
    </source>
</reference>
<dbReference type="EMBL" id="CP000416">
    <property type="protein sequence ID" value="ABJ63761.1"/>
    <property type="molecule type" value="Genomic_DNA"/>
</dbReference>
<dbReference type="RefSeq" id="WP_011667386.1">
    <property type="nucleotide sequence ID" value="NC_008497.1"/>
</dbReference>
<dbReference type="SMR" id="Q03SR1"/>
<dbReference type="STRING" id="387344.LVIS_0616"/>
<dbReference type="KEGG" id="lbr:LVIS_0616"/>
<dbReference type="eggNOG" id="COG2344">
    <property type="taxonomic scope" value="Bacteria"/>
</dbReference>
<dbReference type="HOGENOM" id="CLU_061534_1_1_9"/>
<dbReference type="Proteomes" id="UP000001652">
    <property type="component" value="Chromosome"/>
</dbReference>
<dbReference type="GO" id="GO:0005737">
    <property type="term" value="C:cytoplasm"/>
    <property type="evidence" value="ECO:0007669"/>
    <property type="project" value="UniProtKB-SubCell"/>
</dbReference>
<dbReference type="GO" id="GO:0003677">
    <property type="term" value="F:DNA binding"/>
    <property type="evidence" value="ECO:0007669"/>
    <property type="project" value="UniProtKB-UniRule"/>
</dbReference>
<dbReference type="GO" id="GO:0003700">
    <property type="term" value="F:DNA-binding transcription factor activity"/>
    <property type="evidence" value="ECO:0007669"/>
    <property type="project" value="UniProtKB-UniRule"/>
</dbReference>
<dbReference type="GO" id="GO:0045892">
    <property type="term" value="P:negative regulation of DNA-templated transcription"/>
    <property type="evidence" value="ECO:0007669"/>
    <property type="project" value="InterPro"/>
</dbReference>
<dbReference type="GO" id="GO:0051775">
    <property type="term" value="P:response to redox state"/>
    <property type="evidence" value="ECO:0007669"/>
    <property type="project" value="InterPro"/>
</dbReference>
<dbReference type="Gene3D" id="3.40.50.720">
    <property type="entry name" value="NAD(P)-binding Rossmann-like Domain"/>
    <property type="match status" value="1"/>
</dbReference>
<dbReference type="Gene3D" id="1.10.10.10">
    <property type="entry name" value="Winged helix-like DNA-binding domain superfamily/Winged helix DNA-binding domain"/>
    <property type="match status" value="1"/>
</dbReference>
<dbReference type="HAMAP" id="MF_01131">
    <property type="entry name" value="Rex"/>
    <property type="match status" value="1"/>
</dbReference>
<dbReference type="InterPro" id="IPR003781">
    <property type="entry name" value="CoA-bd"/>
</dbReference>
<dbReference type="InterPro" id="IPR036291">
    <property type="entry name" value="NAD(P)-bd_dom_sf"/>
</dbReference>
<dbReference type="InterPro" id="IPR009718">
    <property type="entry name" value="Rex_DNA-bd_C_dom"/>
</dbReference>
<dbReference type="InterPro" id="IPR022876">
    <property type="entry name" value="Tscrpt_rep_Rex"/>
</dbReference>
<dbReference type="InterPro" id="IPR036388">
    <property type="entry name" value="WH-like_DNA-bd_sf"/>
</dbReference>
<dbReference type="InterPro" id="IPR036390">
    <property type="entry name" value="WH_DNA-bd_sf"/>
</dbReference>
<dbReference type="NCBIfam" id="NF003989">
    <property type="entry name" value="PRK05472.1-3"/>
    <property type="match status" value="1"/>
</dbReference>
<dbReference type="NCBIfam" id="NF003991">
    <property type="entry name" value="PRK05472.1-5"/>
    <property type="match status" value="1"/>
</dbReference>
<dbReference type="NCBIfam" id="NF003994">
    <property type="entry name" value="PRK05472.2-3"/>
    <property type="match status" value="1"/>
</dbReference>
<dbReference type="NCBIfam" id="NF003995">
    <property type="entry name" value="PRK05472.2-4"/>
    <property type="match status" value="1"/>
</dbReference>
<dbReference type="NCBIfam" id="NF003996">
    <property type="entry name" value="PRK05472.2-5"/>
    <property type="match status" value="1"/>
</dbReference>
<dbReference type="PANTHER" id="PTHR35786">
    <property type="entry name" value="REDOX-SENSING TRANSCRIPTIONAL REPRESSOR REX"/>
    <property type="match status" value="1"/>
</dbReference>
<dbReference type="PANTHER" id="PTHR35786:SF1">
    <property type="entry name" value="REDOX-SENSING TRANSCRIPTIONAL REPRESSOR REX 1"/>
    <property type="match status" value="1"/>
</dbReference>
<dbReference type="Pfam" id="PF02629">
    <property type="entry name" value="CoA_binding"/>
    <property type="match status" value="1"/>
</dbReference>
<dbReference type="Pfam" id="PF06971">
    <property type="entry name" value="Put_DNA-bind_N"/>
    <property type="match status" value="1"/>
</dbReference>
<dbReference type="SMART" id="SM00881">
    <property type="entry name" value="CoA_binding"/>
    <property type="match status" value="1"/>
</dbReference>
<dbReference type="SUPFAM" id="SSF51735">
    <property type="entry name" value="NAD(P)-binding Rossmann-fold domains"/>
    <property type="match status" value="1"/>
</dbReference>
<dbReference type="SUPFAM" id="SSF46785">
    <property type="entry name" value="Winged helix' DNA-binding domain"/>
    <property type="match status" value="1"/>
</dbReference>
<keyword id="KW-0963">Cytoplasm</keyword>
<keyword id="KW-0238">DNA-binding</keyword>
<keyword id="KW-0520">NAD</keyword>
<keyword id="KW-1185">Reference proteome</keyword>
<keyword id="KW-0678">Repressor</keyword>
<keyword id="KW-0804">Transcription</keyword>
<keyword id="KW-0805">Transcription regulation</keyword>